<sequence>MKIGVVLVLLTVFVVVMSSTSVSAQSDEDECLKETGQMQLNCFPYLTDNRIHTPSFACCSEVYTVGKTYVDCFCQFINNGGPSFGIVVSQKLLDLPELCGVYGACGNGKNFKNTSL</sequence>
<name>LTG17_ARATH</name>
<protein>
    <recommendedName>
        <fullName evidence="6">Non-specific lipid transfer protein GPI-anchored 17</fullName>
        <shortName evidence="6">AtLTPG-17</shortName>
        <shortName evidence="6">Protein LTP-GPI-ANCHORED 17</shortName>
    </recommendedName>
</protein>
<dbReference type="EMBL" id="AP000731">
    <property type="protein sequence ID" value="BAB01472.1"/>
    <property type="status" value="ALT_SEQ"/>
    <property type="molecule type" value="Genomic_DNA"/>
</dbReference>
<dbReference type="EMBL" id="CP002686">
    <property type="protein sequence ID" value="ANM65709.1"/>
    <property type="status" value="ALT_SEQ"/>
    <property type="molecule type" value="Genomic_DNA"/>
</dbReference>
<dbReference type="EMBL" id="BT004995">
    <property type="protein sequence ID" value="AAO50528.1"/>
    <property type="molecule type" value="mRNA"/>
</dbReference>
<dbReference type="EMBL" id="AK117414">
    <property type="protein sequence ID" value="BAC42080.1"/>
    <property type="molecule type" value="mRNA"/>
</dbReference>
<dbReference type="EMBL" id="AY084552">
    <property type="protein sequence ID" value="AAM61119.1"/>
    <property type="molecule type" value="mRNA"/>
</dbReference>
<dbReference type="RefSeq" id="NP_001327657.1">
    <property type="nucleotide sequence ID" value="NM_001338593.1"/>
</dbReference>
<dbReference type="IntAct" id="Q8GYS8">
    <property type="interactions" value="5"/>
</dbReference>
<dbReference type="GlyCosmos" id="Q8GYS8">
    <property type="glycosylation" value="1 site, No reported glycans"/>
</dbReference>
<dbReference type="GlyGen" id="Q8GYS8">
    <property type="glycosylation" value="1 site"/>
</dbReference>
<dbReference type="ProteomicsDB" id="195447"/>
<dbReference type="GeneID" id="821829"/>
<dbReference type="KEGG" id="ath:AT3G22570"/>
<dbReference type="Araport" id="AT3G22570"/>
<dbReference type="TAIR" id="AT3G22570">
    <property type="gene designation" value="LTPG17"/>
</dbReference>
<dbReference type="HOGENOM" id="CLU_2100246_0_0_1"/>
<dbReference type="InParanoid" id="Q8GYS8"/>
<dbReference type="PhylomeDB" id="Q8GYS8"/>
<dbReference type="PRO" id="PR:Q8GYS8"/>
<dbReference type="Proteomes" id="UP000006548">
    <property type="component" value="Chromosome 3"/>
</dbReference>
<dbReference type="ExpressionAtlas" id="Q8GYS8">
    <property type="expression patterns" value="baseline and differential"/>
</dbReference>
<dbReference type="GO" id="GO:0005886">
    <property type="term" value="C:plasma membrane"/>
    <property type="evidence" value="ECO:0007669"/>
    <property type="project" value="UniProtKB-SubCell"/>
</dbReference>
<dbReference type="GO" id="GO:0098552">
    <property type="term" value="C:side of membrane"/>
    <property type="evidence" value="ECO:0007669"/>
    <property type="project" value="UniProtKB-KW"/>
</dbReference>
<dbReference type="CDD" id="cd00010">
    <property type="entry name" value="AAI_LTSS"/>
    <property type="match status" value="1"/>
</dbReference>
<dbReference type="Gene3D" id="1.10.110.10">
    <property type="entry name" value="Plant lipid-transfer and hydrophobic proteins"/>
    <property type="match status" value="1"/>
</dbReference>
<dbReference type="InterPro" id="IPR036312">
    <property type="entry name" value="Bifun_inhib/LTP/seed_sf"/>
</dbReference>
<dbReference type="InterPro" id="IPR016140">
    <property type="entry name" value="Bifunc_inhib/LTP/seed_store"/>
</dbReference>
<dbReference type="InterPro" id="IPR043325">
    <property type="entry name" value="LTSS"/>
</dbReference>
<dbReference type="PANTHER" id="PTHR33044">
    <property type="entry name" value="BIFUNCTIONAL INHIBITOR/LIPID-TRANSFER PROTEIN/SEED STORAGE 2S ALBUMIN SUPERFAMILY PROTEIN-RELATED"/>
    <property type="match status" value="1"/>
</dbReference>
<dbReference type="Pfam" id="PF14368">
    <property type="entry name" value="LTP_2"/>
    <property type="match status" value="1"/>
</dbReference>
<dbReference type="SUPFAM" id="SSF47699">
    <property type="entry name" value="Bifunctional inhibitor/lipid-transfer protein/seed storage 2S albumin"/>
    <property type="match status" value="1"/>
</dbReference>
<organism>
    <name type="scientific">Arabidopsis thaliana</name>
    <name type="common">Mouse-ear cress</name>
    <dbReference type="NCBI Taxonomy" id="3702"/>
    <lineage>
        <taxon>Eukaryota</taxon>
        <taxon>Viridiplantae</taxon>
        <taxon>Streptophyta</taxon>
        <taxon>Embryophyta</taxon>
        <taxon>Tracheophyta</taxon>
        <taxon>Spermatophyta</taxon>
        <taxon>Magnoliopsida</taxon>
        <taxon>eudicotyledons</taxon>
        <taxon>Gunneridae</taxon>
        <taxon>Pentapetalae</taxon>
        <taxon>rosids</taxon>
        <taxon>malvids</taxon>
        <taxon>Brassicales</taxon>
        <taxon>Brassicaceae</taxon>
        <taxon>Camelineae</taxon>
        <taxon>Arabidopsis</taxon>
    </lineage>
</organism>
<comment type="function">
    <text evidence="2">Probable lipid transfer protein.</text>
</comment>
<comment type="subcellular location">
    <subcellularLocation>
        <location evidence="3">Cell membrane</location>
        <topology evidence="3">Lipid-anchor</topology>
        <topology evidence="3">GPI-anchor</topology>
    </subcellularLocation>
</comment>
<comment type="tissue specificity">
    <text evidence="5">Expressed in seedlings, preferentially in roots.</text>
</comment>
<comment type="similarity">
    <text evidence="7">Belongs to the plant LTP family.</text>
</comment>
<comment type="sequence caution" evidence="7">
    <conflict type="erroneous gene model prediction">
        <sequence resource="EMBL-CDS" id="ANM65709"/>
    </conflict>
</comment>
<comment type="sequence caution" evidence="7">
    <conflict type="erroneous gene model prediction">
        <sequence resource="EMBL-CDS" id="BAB01472"/>
    </conflict>
</comment>
<proteinExistence type="evidence at transcript level"/>
<keyword id="KW-1003">Cell membrane</keyword>
<keyword id="KW-1015">Disulfide bond</keyword>
<keyword id="KW-0325">Glycoprotein</keyword>
<keyword id="KW-0336">GPI-anchor</keyword>
<keyword id="KW-0449">Lipoprotein</keyword>
<keyword id="KW-0472">Membrane</keyword>
<keyword id="KW-1185">Reference proteome</keyword>
<keyword id="KW-0732">Signal</keyword>
<gene>
    <name evidence="6" type="primary">LTPG17</name>
    <name evidence="8" type="ordered locus">At3g22570</name>
    <name evidence="9" type="ORF">F16J14.13</name>
</gene>
<feature type="signal peptide" evidence="3">
    <location>
        <begin position="1"/>
        <end position="24"/>
    </location>
</feature>
<feature type="chain" id="PRO_5010847050" description="Non-specific lipid transfer protein GPI-anchored 17">
    <location>
        <begin position="25"/>
        <end position="107"/>
    </location>
</feature>
<feature type="propeptide" id="PRO_0000451648" description="Removed in mature form" evidence="3">
    <location>
        <begin position="108"/>
        <end position="116"/>
    </location>
</feature>
<feature type="lipid moiety-binding region" description="GPI-anchor amidated asparagine" evidence="3">
    <location>
        <position position="107"/>
    </location>
</feature>
<feature type="glycosylation site" description="N-linked (GlcNAc...) asparagine" evidence="4">
    <location>
        <position position="113"/>
    </location>
</feature>
<feature type="disulfide bond" evidence="1">
    <location>
        <begin position="31"/>
        <end position="74"/>
    </location>
</feature>
<feature type="disulfide bond" evidence="1">
    <location>
        <begin position="42"/>
        <end position="58"/>
    </location>
</feature>
<feature type="disulfide bond" evidence="1">
    <location>
        <begin position="59"/>
        <end position="99"/>
    </location>
</feature>
<feature type="sequence conflict" description="In Ref. 5; AAM61119." evidence="7" ref="5">
    <original>V</original>
    <variation>A</variation>
    <location>
        <position position="15"/>
    </location>
</feature>
<accession>Q8GYS8</accession>
<accession>A0A1I9LT01</accession>
<accession>Q8LFZ3</accession>
<accession>Q9LJ89</accession>
<evidence type="ECO:0000250" key="1">
    <source>
        <dbReference type="UniProtKB" id="A0A0B4JDK1"/>
    </source>
</evidence>
<evidence type="ECO:0000250" key="2">
    <source>
        <dbReference type="UniProtKB" id="Q9C7F7"/>
    </source>
</evidence>
<evidence type="ECO:0000255" key="3"/>
<evidence type="ECO:0000255" key="4">
    <source>
        <dbReference type="PROSITE-ProRule" id="PRU00498"/>
    </source>
</evidence>
<evidence type="ECO:0000269" key="5">
    <source>
    </source>
</evidence>
<evidence type="ECO:0000303" key="6">
    <source>
    </source>
</evidence>
<evidence type="ECO:0000305" key="7"/>
<evidence type="ECO:0000312" key="8">
    <source>
        <dbReference type="Araport" id="AT3G22570"/>
    </source>
</evidence>
<evidence type="ECO:0000312" key="9">
    <source>
        <dbReference type="EMBL" id="BAB01472.1"/>
    </source>
</evidence>
<reference key="1">
    <citation type="journal article" date="2000" name="DNA Res.">
        <title>Structural analysis of Arabidopsis thaliana chromosome 3. II. Sequence features of the 4,251,695 bp regions covered by 90 P1, TAC and BAC clones.</title>
        <authorList>
            <person name="Kaneko T."/>
            <person name="Katoh T."/>
            <person name="Sato S."/>
            <person name="Nakamura Y."/>
            <person name="Asamizu E."/>
            <person name="Tabata S."/>
        </authorList>
    </citation>
    <scope>NUCLEOTIDE SEQUENCE [LARGE SCALE GENOMIC DNA]</scope>
    <source>
        <strain>cv. Columbia</strain>
    </source>
</reference>
<reference key="2">
    <citation type="journal article" date="2017" name="Plant J.">
        <title>Araport11: a complete reannotation of the Arabidopsis thaliana reference genome.</title>
        <authorList>
            <person name="Cheng C.Y."/>
            <person name="Krishnakumar V."/>
            <person name="Chan A.P."/>
            <person name="Thibaud-Nissen F."/>
            <person name="Schobel S."/>
            <person name="Town C.D."/>
        </authorList>
    </citation>
    <scope>GENOME REANNOTATION</scope>
    <source>
        <strain>cv. Columbia</strain>
    </source>
</reference>
<reference key="3">
    <citation type="journal article" date="2002" name="Science">
        <title>Functional annotation of a full-length Arabidopsis cDNA collection.</title>
        <authorList>
            <person name="Seki M."/>
            <person name="Narusaka M."/>
            <person name="Kamiya A."/>
            <person name="Ishida J."/>
            <person name="Satou M."/>
            <person name="Sakurai T."/>
            <person name="Nakajima M."/>
            <person name="Enju A."/>
            <person name="Akiyama K."/>
            <person name="Oono Y."/>
            <person name="Muramatsu M."/>
            <person name="Hayashizaki Y."/>
            <person name="Kawai J."/>
            <person name="Carninci P."/>
            <person name="Itoh M."/>
            <person name="Ishii Y."/>
            <person name="Arakawa T."/>
            <person name="Shibata K."/>
            <person name="Shinagawa A."/>
            <person name="Shinozaki K."/>
        </authorList>
    </citation>
    <scope>NUCLEOTIDE SEQUENCE [LARGE SCALE MRNA]</scope>
    <source>
        <strain>cv. Columbia</strain>
    </source>
</reference>
<reference key="4">
    <citation type="journal article" date="2003" name="Science">
        <title>Empirical analysis of transcriptional activity in the Arabidopsis genome.</title>
        <authorList>
            <person name="Yamada K."/>
            <person name="Lim J."/>
            <person name="Dale J.M."/>
            <person name="Chen H."/>
            <person name="Shinn P."/>
            <person name="Palm C.J."/>
            <person name="Southwick A.M."/>
            <person name="Wu H.C."/>
            <person name="Kim C.J."/>
            <person name="Nguyen M."/>
            <person name="Pham P.K."/>
            <person name="Cheuk R.F."/>
            <person name="Karlin-Newmann G."/>
            <person name="Liu S.X."/>
            <person name="Lam B."/>
            <person name="Sakano H."/>
            <person name="Wu T."/>
            <person name="Yu G."/>
            <person name="Miranda M."/>
            <person name="Quach H.L."/>
            <person name="Tripp M."/>
            <person name="Chang C.H."/>
            <person name="Lee J.M."/>
            <person name="Toriumi M.J."/>
            <person name="Chan M.M."/>
            <person name="Tang C.C."/>
            <person name="Onodera C.S."/>
            <person name="Deng J.M."/>
            <person name="Akiyama K."/>
            <person name="Ansari Y."/>
            <person name="Arakawa T."/>
            <person name="Banh J."/>
            <person name="Banno F."/>
            <person name="Bowser L."/>
            <person name="Brooks S.Y."/>
            <person name="Carninci P."/>
            <person name="Chao Q."/>
            <person name="Choy N."/>
            <person name="Enju A."/>
            <person name="Goldsmith A.D."/>
            <person name="Gurjal M."/>
            <person name="Hansen N.F."/>
            <person name="Hayashizaki Y."/>
            <person name="Johnson-Hopson C."/>
            <person name="Hsuan V.W."/>
            <person name="Iida K."/>
            <person name="Karnes M."/>
            <person name="Khan S."/>
            <person name="Koesema E."/>
            <person name="Ishida J."/>
            <person name="Jiang P.X."/>
            <person name="Jones T."/>
            <person name="Kawai J."/>
            <person name="Kamiya A."/>
            <person name="Meyers C."/>
            <person name="Nakajima M."/>
            <person name="Narusaka M."/>
            <person name="Seki M."/>
            <person name="Sakurai T."/>
            <person name="Satou M."/>
            <person name="Tamse R."/>
            <person name="Vaysberg M."/>
            <person name="Wallender E.K."/>
            <person name="Wong C."/>
            <person name="Yamamura Y."/>
            <person name="Yuan S."/>
            <person name="Shinozaki K."/>
            <person name="Davis R.W."/>
            <person name="Theologis A."/>
            <person name="Ecker J.R."/>
        </authorList>
    </citation>
    <scope>NUCLEOTIDE SEQUENCE [LARGE SCALE MRNA]</scope>
    <source>
        <strain>cv. Columbia</strain>
    </source>
</reference>
<reference key="5">
    <citation type="submission" date="2002-03" db="EMBL/GenBank/DDBJ databases">
        <title>Full-length cDNA from Arabidopsis thaliana.</title>
        <authorList>
            <person name="Brover V.V."/>
            <person name="Troukhan M.E."/>
            <person name="Alexandrov N.A."/>
            <person name="Lu Y.-P."/>
            <person name="Flavell R.B."/>
            <person name="Feldmann K.A."/>
        </authorList>
    </citation>
    <scope>NUCLEOTIDE SEQUENCE [LARGE SCALE MRNA]</scope>
</reference>
<reference key="6">
    <citation type="journal article" date="2013" name="Plant Mol. Biol.">
        <title>Coexpression patterns indicate that GPI-anchored non-specific lipid transfer proteins are involved in accumulation of cuticular wax, suberin and sporopollenin.</title>
        <authorList>
            <person name="Edstam M.M."/>
            <person name="Blomqvist K."/>
            <person name="Ekloef A."/>
            <person name="Wennergren U."/>
            <person name="Edqvist J."/>
        </authorList>
    </citation>
    <scope>TISSUE SPECIFICITY</scope>
    <scope>GENE FAMILY</scope>
    <scope>NOMENCLATURE</scope>
    <source>
        <strain>cv. Columbia</strain>
    </source>
</reference>